<proteinExistence type="inferred from homology"/>
<sequence>MVRAKRKLDHIEYALSTGQSRTHGFHDIDFVHQSLPNSSYETITCETKIGELSLSSPIFINAMTGGGGEKTLHINEQLAYVAKHHNLAMAVGSQMAALKDESEAASYKIIRKVNPNGIFFANLGSEATVEQAERAVDMVEANALQIHLNVIQELTMPEGDRDFTGVLQRIEKIVLNSKVPVIVKEVGFGMSKETMQQLASVGVTAIDIGGQGGTNFAAVENERRQRMLSYFNNWGIQTATSIIEATSTNNNLSFIASGGIQTALDVAKAIALGANTTAFAGYFLRILMEDGIEKLVDEIDLLHTDLKFIMTALGAKTIEELQSVPLVIKGETYHWLTQRGIDTTHYSRR</sequence>
<gene>
    <name evidence="1" type="primary">fni</name>
    <name type="ordered locus">BT9727_1381</name>
</gene>
<organism>
    <name type="scientific">Bacillus thuringiensis subsp. konkukian (strain 97-27)</name>
    <dbReference type="NCBI Taxonomy" id="281309"/>
    <lineage>
        <taxon>Bacteria</taxon>
        <taxon>Bacillati</taxon>
        <taxon>Bacillota</taxon>
        <taxon>Bacilli</taxon>
        <taxon>Bacillales</taxon>
        <taxon>Bacillaceae</taxon>
        <taxon>Bacillus</taxon>
        <taxon>Bacillus cereus group</taxon>
    </lineage>
</organism>
<keyword id="KW-0963">Cytoplasm</keyword>
<keyword id="KW-0285">Flavoprotein</keyword>
<keyword id="KW-0288">FMN</keyword>
<keyword id="KW-0413">Isomerase</keyword>
<keyword id="KW-0414">Isoprene biosynthesis</keyword>
<keyword id="KW-0460">Magnesium</keyword>
<keyword id="KW-0479">Metal-binding</keyword>
<keyword id="KW-0521">NADP</keyword>
<evidence type="ECO:0000255" key="1">
    <source>
        <dbReference type="HAMAP-Rule" id="MF_00354"/>
    </source>
</evidence>
<accession>Q6HL56</accession>
<feature type="chain" id="PRO_0000229499" description="Isopentenyl-diphosphate delta-isomerase">
    <location>
        <begin position="1"/>
        <end position="349"/>
    </location>
</feature>
<feature type="binding site" evidence="1">
    <location>
        <begin position="6"/>
        <end position="7"/>
    </location>
    <ligand>
        <name>substrate</name>
    </ligand>
</feature>
<feature type="binding site" evidence="1">
    <location>
        <begin position="62"/>
        <end position="64"/>
    </location>
    <ligand>
        <name>FMN</name>
        <dbReference type="ChEBI" id="CHEBI:58210"/>
    </ligand>
</feature>
<feature type="binding site" evidence="1">
    <location>
        <position position="93"/>
    </location>
    <ligand>
        <name>FMN</name>
        <dbReference type="ChEBI" id="CHEBI:58210"/>
    </ligand>
</feature>
<feature type="binding site" evidence="1">
    <location>
        <position position="122"/>
    </location>
    <ligand>
        <name>FMN</name>
        <dbReference type="ChEBI" id="CHEBI:58210"/>
    </ligand>
</feature>
<feature type="binding site" evidence="1">
    <location>
        <position position="152"/>
    </location>
    <ligand>
        <name>substrate</name>
    </ligand>
</feature>
<feature type="binding site" evidence="1">
    <location>
        <position position="153"/>
    </location>
    <ligand>
        <name>Mg(2+)</name>
        <dbReference type="ChEBI" id="CHEBI:18420"/>
    </ligand>
</feature>
<feature type="binding site" evidence="1">
    <location>
        <position position="184"/>
    </location>
    <ligand>
        <name>FMN</name>
        <dbReference type="ChEBI" id="CHEBI:58210"/>
    </ligand>
</feature>
<feature type="binding site" evidence="1">
    <location>
        <position position="214"/>
    </location>
    <ligand>
        <name>FMN</name>
        <dbReference type="ChEBI" id="CHEBI:58210"/>
    </ligand>
</feature>
<feature type="binding site" evidence="1">
    <location>
        <begin position="258"/>
        <end position="259"/>
    </location>
    <ligand>
        <name>FMN</name>
        <dbReference type="ChEBI" id="CHEBI:58210"/>
    </ligand>
</feature>
<feature type="binding site" evidence="1">
    <location>
        <begin position="280"/>
        <end position="281"/>
    </location>
    <ligand>
        <name>FMN</name>
        <dbReference type="ChEBI" id="CHEBI:58210"/>
    </ligand>
</feature>
<comment type="function">
    <text evidence="1">Involved in the biosynthesis of isoprenoids. Catalyzes the 1,3-allylic rearrangement of the homoallylic substrate isopentenyl (IPP) to its allylic isomer, dimethylallyl diphosphate (DMAPP).</text>
</comment>
<comment type="catalytic activity">
    <reaction evidence="1">
        <text>isopentenyl diphosphate = dimethylallyl diphosphate</text>
        <dbReference type="Rhea" id="RHEA:23284"/>
        <dbReference type="ChEBI" id="CHEBI:57623"/>
        <dbReference type="ChEBI" id="CHEBI:128769"/>
        <dbReference type="EC" id="5.3.3.2"/>
    </reaction>
</comment>
<comment type="cofactor">
    <cofactor evidence="1">
        <name>FMN</name>
        <dbReference type="ChEBI" id="CHEBI:58210"/>
    </cofactor>
</comment>
<comment type="cofactor">
    <cofactor evidence="1">
        <name>NADPH</name>
        <dbReference type="ChEBI" id="CHEBI:57783"/>
    </cofactor>
</comment>
<comment type="cofactor">
    <cofactor evidence="1">
        <name>Mg(2+)</name>
        <dbReference type="ChEBI" id="CHEBI:18420"/>
    </cofactor>
</comment>
<comment type="subunit">
    <text evidence="1">Homooctamer. Dimer of tetramers.</text>
</comment>
<comment type="subcellular location">
    <subcellularLocation>
        <location evidence="1">Cytoplasm</location>
    </subcellularLocation>
</comment>
<comment type="similarity">
    <text evidence="1">Belongs to the IPP isomerase type 2 family.</text>
</comment>
<name>IDI2_BACHK</name>
<reference key="1">
    <citation type="journal article" date="2006" name="J. Bacteriol.">
        <title>Pathogenomic sequence analysis of Bacillus cereus and Bacillus thuringiensis isolates closely related to Bacillus anthracis.</title>
        <authorList>
            <person name="Han C.S."/>
            <person name="Xie G."/>
            <person name="Challacombe J.F."/>
            <person name="Altherr M.R."/>
            <person name="Bhotika S.S."/>
            <person name="Bruce D."/>
            <person name="Campbell C.S."/>
            <person name="Campbell M.L."/>
            <person name="Chen J."/>
            <person name="Chertkov O."/>
            <person name="Cleland C."/>
            <person name="Dimitrijevic M."/>
            <person name="Doggett N.A."/>
            <person name="Fawcett J.J."/>
            <person name="Glavina T."/>
            <person name="Goodwin L.A."/>
            <person name="Hill K.K."/>
            <person name="Hitchcock P."/>
            <person name="Jackson P.J."/>
            <person name="Keim P."/>
            <person name="Kewalramani A.R."/>
            <person name="Longmire J."/>
            <person name="Lucas S."/>
            <person name="Malfatti S."/>
            <person name="McMurry K."/>
            <person name="Meincke L.J."/>
            <person name="Misra M."/>
            <person name="Moseman B.L."/>
            <person name="Mundt M."/>
            <person name="Munk A.C."/>
            <person name="Okinaka R.T."/>
            <person name="Parson-Quintana B."/>
            <person name="Reilly L.P."/>
            <person name="Richardson P."/>
            <person name="Robinson D.L."/>
            <person name="Rubin E."/>
            <person name="Saunders E."/>
            <person name="Tapia R."/>
            <person name="Tesmer J.G."/>
            <person name="Thayer N."/>
            <person name="Thompson L.S."/>
            <person name="Tice H."/>
            <person name="Ticknor L.O."/>
            <person name="Wills P.L."/>
            <person name="Brettin T.S."/>
            <person name="Gilna P."/>
        </authorList>
    </citation>
    <scope>NUCLEOTIDE SEQUENCE [LARGE SCALE GENOMIC DNA]</scope>
    <source>
        <strain>97-27</strain>
    </source>
</reference>
<dbReference type="EC" id="5.3.3.2" evidence="1"/>
<dbReference type="EMBL" id="AE017355">
    <property type="protein sequence ID" value="AAT63233.1"/>
    <property type="molecule type" value="Genomic_DNA"/>
</dbReference>
<dbReference type="RefSeq" id="WP_000251056.1">
    <property type="nucleotide sequence ID" value="NC_005957.1"/>
</dbReference>
<dbReference type="RefSeq" id="YP_035715.1">
    <property type="nucleotide sequence ID" value="NC_005957.1"/>
</dbReference>
<dbReference type="SMR" id="Q6HL56"/>
<dbReference type="KEGG" id="btk:BT9727_1381"/>
<dbReference type="PATRIC" id="fig|281309.8.peg.1453"/>
<dbReference type="HOGENOM" id="CLU_065515_0_0_9"/>
<dbReference type="Proteomes" id="UP000001301">
    <property type="component" value="Chromosome"/>
</dbReference>
<dbReference type="GO" id="GO:0005737">
    <property type="term" value="C:cytoplasm"/>
    <property type="evidence" value="ECO:0007669"/>
    <property type="project" value="UniProtKB-SubCell"/>
</dbReference>
<dbReference type="GO" id="GO:0010181">
    <property type="term" value="F:FMN binding"/>
    <property type="evidence" value="ECO:0007669"/>
    <property type="project" value="UniProtKB-UniRule"/>
</dbReference>
<dbReference type="GO" id="GO:0004452">
    <property type="term" value="F:isopentenyl-diphosphate delta-isomerase activity"/>
    <property type="evidence" value="ECO:0007669"/>
    <property type="project" value="UniProtKB-UniRule"/>
</dbReference>
<dbReference type="GO" id="GO:0000287">
    <property type="term" value="F:magnesium ion binding"/>
    <property type="evidence" value="ECO:0007669"/>
    <property type="project" value="UniProtKB-UniRule"/>
</dbReference>
<dbReference type="GO" id="GO:0070402">
    <property type="term" value="F:NADPH binding"/>
    <property type="evidence" value="ECO:0007669"/>
    <property type="project" value="UniProtKB-UniRule"/>
</dbReference>
<dbReference type="GO" id="GO:0016491">
    <property type="term" value="F:oxidoreductase activity"/>
    <property type="evidence" value="ECO:0007669"/>
    <property type="project" value="InterPro"/>
</dbReference>
<dbReference type="GO" id="GO:0008299">
    <property type="term" value="P:isoprenoid biosynthetic process"/>
    <property type="evidence" value="ECO:0007669"/>
    <property type="project" value="UniProtKB-UniRule"/>
</dbReference>
<dbReference type="CDD" id="cd02811">
    <property type="entry name" value="IDI-2_FMN"/>
    <property type="match status" value="1"/>
</dbReference>
<dbReference type="FunFam" id="3.20.20.70:FF:000115">
    <property type="entry name" value="Isopentenyl-diphosphate delta-isomerase"/>
    <property type="match status" value="1"/>
</dbReference>
<dbReference type="Gene3D" id="3.20.20.70">
    <property type="entry name" value="Aldolase class I"/>
    <property type="match status" value="1"/>
</dbReference>
<dbReference type="HAMAP" id="MF_00354">
    <property type="entry name" value="Idi_2"/>
    <property type="match status" value="1"/>
</dbReference>
<dbReference type="InterPro" id="IPR013785">
    <property type="entry name" value="Aldolase_TIM"/>
</dbReference>
<dbReference type="InterPro" id="IPR000262">
    <property type="entry name" value="FMN-dep_DH"/>
</dbReference>
<dbReference type="InterPro" id="IPR011179">
    <property type="entry name" value="IPdP_isomerase"/>
</dbReference>
<dbReference type="NCBIfam" id="TIGR02151">
    <property type="entry name" value="IPP_isom_2"/>
    <property type="match status" value="1"/>
</dbReference>
<dbReference type="PANTHER" id="PTHR43665">
    <property type="entry name" value="ISOPENTENYL-DIPHOSPHATE DELTA-ISOMERASE"/>
    <property type="match status" value="1"/>
</dbReference>
<dbReference type="PANTHER" id="PTHR43665:SF1">
    <property type="entry name" value="ISOPENTENYL-DIPHOSPHATE DELTA-ISOMERASE"/>
    <property type="match status" value="1"/>
</dbReference>
<dbReference type="Pfam" id="PF01070">
    <property type="entry name" value="FMN_dh"/>
    <property type="match status" value="1"/>
</dbReference>
<dbReference type="PIRSF" id="PIRSF003314">
    <property type="entry name" value="IPP_isomerase"/>
    <property type="match status" value="1"/>
</dbReference>
<dbReference type="SMART" id="SM01240">
    <property type="entry name" value="IMPDH"/>
    <property type="match status" value="1"/>
</dbReference>
<dbReference type="SUPFAM" id="SSF51395">
    <property type="entry name" value="FMN-linked oxidoreductases"/>
    <property type="match status" value="1"/>
</dbReference>
<protein>
    <recommendedName>
        <fullName evidence="1">Isopentenyl-diphosphate delta-isomerase</fullName>
        <shortName evidence="1">IPP isomerase</shortName>
        <ecNumber evidence="1">5.3.3.2</ecNumber>
    </recommendedName>
    <alternativeName>
        <fullName evidence="1">Isopentenyl diphosphate:dimethylallyl diphosphate isomerase</fullName>
    </alternativeName>
    <alternativeName>
        <fullName evidence="1">Isopentenyl pyrophosphate isomerase</fullName>
    </alternativeName>
    <alternativeName>
        <fullName evidence="1">Type 2 isopentenyl diphosphate isomerase</fullName>
        <shortName evidence="1">IDI-2</shortName>
    </alternativeName>
</protein>